<keyword id="KW-0002">3D-structure</keyword>
<keyword id="KW-0028">Amino-acid biosynthesis</keyword>
<keyword id="KW-0100">Branched-chain amino acid biosynthesis</keyword>
<keyword id="KW-0903">Direct protein sequencing</keyword>
<keyword id="KW-0460">Magnesium</keyword>
<keyword id="KW-0479">Metal-binding</keyword>
<keyword id="KW-0521">NADP</keyword>
<keyword id="KW-0560">Oxidoreductase</keyword>
<keyword id="KW-1185">Reference proteome</keyword>
<sequence length="337" mass="36535">MALEMFYDDDADLSIIQGRKVGVIGYGSQGHAHSLSLRDSGVQVRVGLKQGSRSRPKVEEQGLDVDTPAEVAKWADVVMVLAPDTAQAEIFAGDIEPNLKPGDALFFGHGLNVHFGLIKPPADVAVAMVAPKGPGHLVRRQFVDGKGVPCLVAVEQDPRGDGLALALSYAKAIGGTRAGVIKTTFKDETETDLFGEQTVLCGGTEELVKAGFEVMVEAGYPAELAYFEVLHELKLIVDLMYEGGLARMYYSVSDTAEFGGYLSGPRVIDAGTKERMRDILREIQDGSFVHKLVADVEGGNKQLEELRRQNAEHPIEVVGKKLRDLMSWVDRPITETA</sequence>
<gene>
    <name evidence="1" type="primary">ilvC</name>
    <name type="ordered locus">Rv3001c</name>
    <name type="ORF">MTV012.15c</name>
</gene>
<name>ILVC_MYCTU</name>
<evidence type="ECO:0000255" key="1">
    <source>
        <dbReference type="HAMAP-Rule" id="MF_00435"/>
    </source>
</evidence>
<evidence type="ECO:0000255" key="2">
    <source>
        <dbReference type="PROSITE-ProRule" id="PRU01197"/>
    </source>
</evidence>
<evidence type="ECO:0000255" key="3">
    <source>
        <dbReference type="PROSITE-ProRule" id="PRU01198"/>
    </source>
</evidence>
<evidence type="ECO:0000269" key="4">
    <source>
    </source>
</evidence>
<evidence type="ECO:0000269" key="5">
    <source>
    </source>
</evidence>
<evidence type="ECO:0000303" key="6">
    <source>
    </source>
</evidence>
<evidence type="ECO:0007829" key="7">
    <source>
        <dbReference type="PDB" id="4YPO"/>
    </source>
</evidence>
<comment type="function">
    <text evidence="4">Involved in the biosynthesis of branched-chain amino acids (BCAA). Catalyzes an alkyl-migration followed by a ketol-acid reduction of (S)-2-acetolactate (S2AL) to yield (R)-2,3-dihydroxy-isovalerate. In the isomerase reaction, S2AL is rearranged via a Mg-dependent methyl migration to produce 3-hydroxy-3-methyl-2-ketobutyrate (HMKB). In the reductase reaction, this 2-ketoacid undergoes a metal-dependent reduction by NADPH to yield (R)-2,3-dihydroxy-isovalerate. It is also able to use 3-hydroxypyruvate (HP).</text>
</comment>
<comment type="catalytic activity">
    <reaction evidence="1 4">
        <text>(2R)-2,3-dihydroxy-3-methylbutanoate + NADP(+) = (2S)-2-acetolactate + NADPH + H(+)</text>
        <dbReference type="Rhea" id="RHEA:22068"/>
        <dbReference type="ChEBI" id="CHEBI:15378"/>
        <dbReference type="ChEBI" id="CHEBI:49072"/>
        <dbReference type="ChEBI" id="CHEBI:57783"/>
        <dbReference type="ChEBI" id="CHEBI:58349"/>
        <dbReference type="ChEBI" id="CHEBI:58476"/>
        <dbReference type="EC" id="1.1.1.86"/>
    </reaction>
</comment>
<comment type="catalytic activity">
    <reaction evidence="1">
        <text>(2R,3R)-2,3-dihydroxy-3-methylpentanoate + NADP(+) = (S)-2-ethyl-2-hydroxy-3-oxobutanoate + NADPH + H(+)</text>
        <dbReference type="Rhea" id="RHEA:13493"/>
        <dbReference type="ChEBI" id="CHEBI:15378"/>
        <dbReference type="ChEBI" id="CHEBI:49256"/>
        <dbReference type="ChEBI" id="CHEBI:49258"/>
        <dbReference type="ChEBI" id="CHEBI:57783"/>
        <dbReference type="ChEBI" id="CHEBI:58349"/>
        <dbReference type="EC" id="1.1.1.86"/>
    </reaction>
</comment>
<comment type="cofactor">
    <cofactor evidence="1 4">
        <name>Mg(2+)</name>
        <dbReference type="ChEBI" id="CHEBI:18420"/>
    </cofactor>
    <text evidence="1 4">Binds 2 magnesium ions per subunit.</text>
</comment>
<comment type="activity regulation">
    <text evidence="4">Inhibited by N-hydroxy-N-isopropyloxamate (IpOHA).</text>
</comment>
<comment type="biophysicochemical properties">
    <kinetics>
        <KM evidence="4">2.1 uM for S2AL</KM>
        <KM evidence="4">7.4 uM for NADPH (with HP as substrate)</KM>
        <KM evidence="4">7.7 uM for NADPH (with S2AL as substrate)</KM>
        <KM evidence="4">110 uM for HP</KM>
        <text evidence="4">kcat is 12.5 sec(-1) for reductoisomerase activity with HP as substrate. kcat is 1.4 sec(-1) for reductoisomerase activity with S2AL as substrate.</text>
    </kinetics>
</comment>
<comment type="pathway">
    <text evidence="1">Amino-acid biosynthesis; L-isoleucine biosynthesis; L-isoleucine from 2-oxobutanoate: step 2/4.</text>
</comment>
<comment type="pathway">
    <text evidence="1">Amino-acid biosynthesis; L-valine biosynthesis; L-valine from pyruvate: step 2/4.</text>
</comment>
<comment type="subunit">
    <text evidence="4">Homodimer.</text>
</comment>
<comment type="similarity">
    <text evidence="1">Belongs to the ketol-acid reductoisomerase family.</text>
</comment>
<comment type="sequence caution" evidence="5">
    <conflict type="erroneous initiation">
        <sequence resource="EMBL-CDS" id="CCP45807"/>
    </conflict>
    <text>Truncated N-terminus.</text>
</comment>
<proteinExistence type="evidence at protein level"/>
<reference key="1">
    <citation type="journal article" date="1998" name="Nature">
        <title>Deciphering the biology of Mycobacterium tuberculosis from the complete genome sequence.</title>
        <authorList>
            <person name="Cole S.T."/>
            <person name="Brosch R."/>
            <person name="Parkhill J."/>
            <person name="Garnier T."/>
            <person name="Churcher C.M."/>
            <person name="Harris D.E."/>
            <person name="Gordon S.V."/>
            <person name="Eiglmeier K."/>
            <person name="Gas S."/>
            <person name="Barry C.E. III"/>
            <person name="Tekaia F."/>
            <person name="Badcock K."/>
            <person name="Basham D."/>
            <person name="Brown D."/>
            <person name="Chillingworth T."/>
            <person name="Connor R."/>
            <person name="Davies R.M."/>
            <person name="Devlin K."/>
            <person name="Feltwell T."/>
            <person name="Gentles S."/>
            <person name="Hamlin N."/>
            <person name="Holroyd S."/>
            <person name="Hornsby T."/>
            <person name="Jagels K."/>
            <person name="Krogh A."/>
            <person name="McLean J."/>
            <person name="Moule S."/>
            <person name="Murphy L.D."/>
            <person name="Oliver S."/>
            <person name="Osborne J."/>
            <person name="Quail M.A."/>
            <person name="Rajandream M.A."/>
            <person name="Rogers J."/>
            <person name="Rutter S."/>
            <person name="Seeger K."/>
            <person name="Skelton S."/>
            <person name="Squares S."/>
            <person name="Squares R."/>
            <person name="Sulston J.E."/>
            <person name="Taylor K."/>
            <person name="Whitehead S."/>
            <person name="Barrell B.G."/>
        </authorList>
    </citation>
    <scope>NUCLEOTIDE SEQUENCE [LARGE SCALE GENOMIC DNA]</scope>
    <source>
        <strain>ATCC 25618 / H37Rv</strain>
    </source>
</reference>
<reference key="2">
    <citation type="journal article" date="2022" name="Genomics">
        <title>Deep N-terminomics of Mycobacterium tuberculosis H37Rv extensively correct annotated encoding genes.</title>
        <authorList>
            <person name="Shi J."/>
            <person name="Meng S."/>
            <person name="Wan L."/>
            <person name="Zhang Z."/>
            <person name="Jiang S."/>
            <person name="Zhu H."/>
            <person name="Dai E."/>
            <person name="Chang L."/>
            <person name="Gao H."/>
            <person name="Wan K."/>
            <person name="Zhang L."/>
            <person name="Zhao X."/>
            <person name="Liu H."/>
            <person name="Lyu Z."/>
            <person name="Zhang Y."/>
            <person name="Xu P."/>
        </authorList>
    </citation>
    <scope>PROTEIN SEQUENCE OF 2-20</scope>
    <scope>SEQUENCE REVISION TO N-TERMINUS</scope>
    <source>
        <strain>H37Rv</strain>
    </source>
</reference>
<reference key="3">
    <citation type="journal article" date="2011" name="Mol. Cell. Proteomics">
        <title>Proteogenomic analysis of Mycobacterium tuberculosis by high resolution mass spectrometry.</title>
        <authorList>
            <person name="Kelkar D.S."/>
            <person name="Kumar D."/>
            <person name="Kumar P."/>
            <person name="Balakrishnan L."/>
            <person name="Muthusamy B."/>
            <person name="Yadav A.K."/>
            <person name="Shrivastava P."/>
            <person name="Marimuthu A."/>
            <person name="Anand S."/>
            <person name="Sundaram H."/>
            <person name="Kingsbury R."/>
            <person name="Harsha H.C."/>
            <person name="Nair B."/>
            <person name="Prasad T.S."/>
            <person name="Chauhan D.S."/>
            <person name="Katoch K."/>
            <person name="Katoch V.M."/>
            <person name="Kumar P."/>
            <person name="Chaerkady R."/>
            <person name="Ramachandran S."/>
            <person name="Dash D."/>
            <person name="Pandey A."/>
        </authorList>
    </citation>
    <scope>IDENTIFICATION BY MASS SPECTROMETRY [LARGE SCALE ANALYSIS]</scope>
    <source>
        <strain>ATCC 25618 / H37Rv</strain>
    </source>
</reference>
<reference key="4">
    <citation type="journal article" date="2016" name="FEBS J.">
        <title>Crystal structure of Mycobacterium tuberculosis ketol-acid reductoisomerase at 1.0 A resolution - a potential target for anti-tuberculosis drug discovery.</title>
        <authorList>
            <person name="Lv Y."/>
            <person name="Kandale A."/>
            <person name="Wun S.J."/>
            <person name="McGeary R.P."/>
            <person name="Williams S.J."/>
            <person name="Kobe B."/>
            <person name="Sieber V."/>
            <person name="Schembri M.A."/>
            <person name="Schenk G."/>
            <person name="Guddat L.W."/>
        </authorList>
    </citation>
    <scope>X-RAY CRYSTALLOGRAPHY (1.00 ANGSTROMS) OF 5-337 IN COMPLEX WITH MAGNESIUM IONS</scope>
    <scope>FUNCTION</scope>
    <scope>CATALYTIC ACTIVITY</scope>
    <scope>BIOPHYSICOCHEMICAL PROPERTIES</scope>
    <scope>COFACTOR</scope>
    <scope>ACTIVITY REGULATION</scope>
    <scope>SUBSTRATE SPECIFICITY</scope>
    <scope>SUBUNIT</scope>
</reference>
<protein>
    <recommendedName>
        <fullName evidence="1 6">Ketol-acid reductoisomerase (NADP(+))</fullName>
        <shortName evidence="1 6">KARI</shortName>
        <ecNumber evidence="1 4">1.1.1.86</ecNumber>
    </recommendedName>
    <alternativeName>
        <fullName evidence="1">Acetohydroxy-acid isomeroreductase</fullName>
        <shortName evidence="1">AHIR</shortName>
    </alternativeName>
    <alternativeName>
        <fullName evidence="1">Alpha-keto-beta-hydroxylacyl reductoisomerase</fullName>
    </alternativeName>
    <alternativeName>
        <fullName evidence="1 6">Ketol-acid reductoisomerase type 1</fullName>
    </alternativeName>
    <alternativeName>
        <fullName evidence="1 6">Ketol-acid reductoisomerase type I</fullName>
    </alternativeName>
</protein>
<accession>P9WKJ7</accession>
<accession>L0TE69</accession>
<accession>O53248</accession>
<accession>P65149</accession>
<organism>
    <name type="scientific">Mycobacterium tuberculosis (strain ATCC 25618 / H37Rv)</name>
    <dbReference type="NCBI Taxonomy" id="83332"/>
    <lineage>
        <taxon>Bacteria</taxon>
        <taxon>Bacillati</taxon>
        <taxon>Actinomycetota</taxon>
        <taxon>Actinomycetes</taxon>
        <taxon>Mycobacteriales</taxon>
        <taxon>Mycobacteriaceae</taxon>
        <taxon>Mycobacterium</taxon>
        <taxon>Mycobacterium tuberculosis complex</taxon>
    </lineage>
</organism>
<feature type="initiator methionine" description="Removed" evidence="5">
    <location>
        <position position="1"/>
    </location>
</feature>
<feature type="chain" id="PRO_0000151329" description="Ketol-acid reductoisomerase (NADP(+))">
    <location>
        <begin position="2"/>
        <end position="337"/>
    </location>
</feature>
<feature type="domain" description="KARI N-terminal Rossmann" evidence="2">
    <location>
        <begin position="3"/>
        <end position="183"/>
    </location>
</feature>
<feature type="domain" description="KARI C-terminal knotted" evidence="3">
    <location>
        <begin position="184"/>
        <end position="329"/>
    </location>
</feature>
<feature type="active site" evidence="1">
    <location>
        <position position="109"/>
    </location>
</feature>
<feature type="binding site" evidence="1">
    <location>
        <begin position="26"/>
        <end position="29"/>
    </location>
    <ligand>
        <name>NADP(+)</name>
        <dbReference type="ChEBI" id="CHEBI:58349"/>
    </ligand>
</feature>
<feature type="binding site" evidence="1">
    <location>
        <position position="49"/>
    </location>
    <ligand>
        <name>NADP(+)</name>
        <dbReference type="ChEBI" id="CHEBI:58349"/>
    </ligand>
</feature>
<feature type="binding site" evidence="1">
    <location>
        <position position="52"/>
    </location>
    <ligand>
        <name>NADP(+)</name>
        <dbReference type="ChEBI" id="CHEBI:58349"/>
    </ligand>
</feature>
<feature type="binding site" evidence="1">
    <location>
        <position position="54"/>
    </location>
    <ligand>
        <name>NADP(+)</name>
        <dbReference type="ChEBI" id="CHEBI:58349"/>
    </ligand>
</feature>
<feature type="binding site" evidence="1">
    <location>
        <begin position="84"/>
        <end position="87"/>
    </location>
    <ligand>
        <name>NADP(+)</name>
        <dbReference type="ChEBI" id="CHEBI:58349"/>
    </ligand>
</feature>
<feature type="binding site" evidence="1">
    <location>
        <position position="135"/>
    </location>
    <ligand>
        <name>NADP(+)</name>
        <dbReference type="ChEBI" id="CHEBI:58349"/>
    </ligand>
</feature>
<feature type="binding site" evidence="1 4">
    <location>
        <position position="192"/>
    </location>
    <ligand>
        <name>Mg(2+)</name>
        <dbReference type="ChEBI" id="CHEBI:18420"/>
        <label>1</label>
    </ligand>
</feature>
<feature type="binding site" evidence="1 4">
    <location>
        <position position="192"/>
    </location>
    <ligand>
        <name>Mg(2+)</name>
        <dbReference type="ChEBI" id="CHEBI:18420"/>
        <label>2</label>
    </ligand>
</feature>
<feature type="binding site" evidence="1 4">
    <location>
        <position position="196"/>
    </location>
    <ligand>
        <name>Mg(2+)</name>
        <dbReference type="ChEBI" id="CHEBI:18420"/>
        <label>1</label>
    </ligand>
</feature>
<feature type="binding site" evidence="1 4">
    <location>
        <position position="228"/>
    </location>
    <ligand>
        <name>Mg(2+)</name>
        <dbReference type="ChEBI" id="CHEBI:18420"/>
        <label>2</label>
    </ligand>
</feature>
<feature type="binding site" evidence="1 4">
    <location>
        <position position="232"/>
    </location>
    <ligand>
        <name>Mg(2+)</name>
        <dbReference type="ChEBI" id="CHEBI:18420"/>
        <label>2</label>
    </ligand>
</feature>
<feature type="binding site" evidence="1">
    <location>
        <position position="253"/>
    </location>
    <ligand>
        <name>substrate</name>
    </ligand>
</feature>
<feature type="helix" evidence="7">
    <location>
        <begin position="8"/>
        <end position="10"/>
    </location>
</feature>
<feature type="helix" evidence="7">
    <location>
        <begin position="14"/>
        <end position="17"/>
    </location>
</feature>
<feature type="strand" evidence="7">
    <location>
        <begin position="19"/>
        <end position="24"/>
    </location>
</feature>
<feature type="helix" evidence="7">
    <location>
        <begin position="28"/>
        <end position="39"/>
    </location>
</feature>
<feature type="strand" evidence="7">
    <location>
        <begin position="43"/>
        <end position="47"/>
    </location>
</feature>
<feature type="helix" evidence="7">
    <location>
        <begin position="55"/>
        <end position="60"/>
    </location>
</feature>
<feature type="strand" evidence="7">
    <location>
        <begin position="64"/>
        <end position="66"/>
    </location>
</feature>
<feature type="helix" evidence="7">
    <location>
        <begin position="68"/>
        <end position="74"/>
    </location>
</feature>
<feature type="strand" evidence="7">
    <location>
        <begin position="76"/>
        <end position="80"/>
    </location>
</feature>
<feature type="helix" evidence="7">
    <location>
        <begin position="84"/>
        <end position="86"/>
    </location>
</feature>
<feature type="helix" evidence="7">
    <location>
        <begin position="87"/>
        <end position="93"/>
    </location>
</feature>
<feature type="helix" evidence="7">
    <location>
        <begin position="96"/>
        <end position="98"/>
    </location>
</feature>
<feature type="strand" evidence="7">
    <location>
        <begin position="104"/>
        <end position="110"/>
    </location>
</feature>
<feature type="helix" evidence="7">
    <location>
        <begin position="111"/>
        <end position="114"/>
    </location>
</feature>
<feature type="strand" evidence="7">
    <location>
        <begin position="124"/>
        <end position="133"/>
    </location>
</feature>
<feature type="helix" evidence="7">
    <location>
        <begin position="135"/>
        <end position="143"/>
    </location>
</feature>
<feature type="strand" evidence="7">
    <location>
        <begin position="150"/>
        <end position="156"/>
    </location>
</feature>
<feature type="helix" evidence="7">
    <location>
        <begin position="162"/>
        <end position="172"/>
    </location>
</feature>
<feature type="helix" evidence="7">
    <location>
        <begin position="175"/>
        <end position="178"/>
    </location>
</feature>
<feature type="strand" evidence="7">
    <location>
        <begin position="180"/>
        <end position="182"/>
    </location>
</feature>
<feature type="helix" evidence="7">
    <location>
        <begin position="185"/>
        <end position="198"/>
    </location>
</feature>
<feature type="turn" evidence="7">
    <location>
        <begin position="199"/>
        <end position="202"/>
    </location>
</feature>
<feature type="helix" evidence="7">
    <location>
        <begin position="203"/>
        <end position="217"/>
    </location>
</feature>
<feature type="helix" evidence="7">
    <location>
        <begin position="222"/>
        <end position="229"/>
    </location>
</feature>
<feature type="turn" evidence="7">
    <location>
        <begin position="230"/>
        <end position="232"/>
    </location>
</feature>
<feature type="helix" evidence="7">
    <location>
        <begin position="233"/>
        <end position="251"/>
    </location>
</feature>
<feature type="helix" evidence="7">
    <location>
        <begin position="254"/>
        <end position="267"/>
    </location>
</feature>
<feature type="helix" evidence="7">
    <location>
        <begin position="270"/>
        <end position="284"/>
    </location>
</feature>
<feature type="helix" evidence="7">
    <location>
        <begin position="287"/>
        <end position="297"/>
    </location>
</feature>
<feature type="helix" evidence="7">
    <location>
        <begin position="301"/>
        <end position="311"/>
    </location>
</feature>
<feature type="helix" evidence="7">
    <location>
        <begin position="314"/>
        <end position="323"/>
    </location>
</feature>
<dbReference type="EC" id="1.1.1.86" evidence="1 4"/>
<dbReference type="EMBL" id="AL123456">
    <property type="protein sequence ID" value="CCP45807.1"/>
    <property type="status" value="ALT_INIT"/>
    <property type="molecule type" value="Genomic_DNA"/>
</dbReference>
<dbReference type="PIR" id="D70855">
    <property type="entry name" value="D70855"/>
</dbReference>
<dbReference type="RefSeq" id="NP_217517.3">
    <property type="nucleotide sequence ID" value="NC_000962.3"/>
</dbReference>
<dbReference type="PDB" id="4YPO">
    <property type="method" value="X-ray"/>
    <property type="resolution" value="1.00 A"/>
    <property type="chains" value="A/B=5-337"/>
</dbReference>
<dbReference type="PDBsum" id="4YPO"/>
<dbReference type="SMR" id="P9WKJ7"/>
<dbReference type="FunCoup" id="P9WKJ7">
    <property type="interactions" value="280"/>
</dbReference>
<dbReference type="STRING" id="83332.Rv3001c"/>
<dbReference type="PaxDb" id="83332-Rv3001c"/>
<dbReference type="DNASU" id="887483"/>
<dbReference type="GeneID" id="887483"/>
<dbReference type="KEGG" id="mtu:Rv3001c"/>
<dbReference type="PATRIC" id="fig|83332.12.peg.3350"/>
<dbReference type="TubercuList" id="Rv3001c"/>
<dbReference type="eggNOG" id="COG0059">
    <property type="taxonomic scope" value="Bacteria"/>
</dbReference>
<dbReference type="InParanoid" id="P9WKJ7"/>
<dbReference type="OrthoDB" id="9804088at2"/>
<dbReference type="BRENDA" id="1.1.1.86">
    <property type="organism ID" value="3445"/>
</dbReference>
<dbReference type="UniPathway" id="UPA00047">
    <property type="reaction ID" value="UER00056"/>
</dbReference>
<dbReference type="UniPathway" id="UPA00049">
    <property type="reaction ID" value="UER00060"/>
</dbReference>
<dbReference type="Proteomes" id="UP000001584">
    <property type="component" value="Chromosome"/>
</dbReference>
<dbReference type="GO" id="GO:0005829">
    <property type="term" value="C:cytosol"/>
    <property type="evidence" value="ECO:0007005"/>
    <property type="project" value="MTBBASE"/>
</dbReference>
<dbReference type="GO" id="GO:0005886">
    <property type="term" value="C:plasma membrane"/>
    <property type="evidence" value="ECO:0007005"/>
    <property type="project" value="MTBBASE"/>
</dbReference>
<dbReference type="GO" id="GO:0004455">
    <property type="term" value="F:ketol-acid reductoisomerase activity"/>
    <property type="evidence" value="ECO:0000318"/>
    <property type="project" value="GO_Central"/>
</dbReference>
<dbReference type="GO" id="GO:0000287">
    <property type="term" value="F:magnesium ion binding"/>
    <property type="evidence" value="ECO:0007669"/>
    <property type="project" value="UniProtKB-UniRule"/>
</dbReference>
<dbReference type="GO" id="GO:0050661">
    <property type="term" value="F:NADP binding"/>
    <property type="evidence" value="ECO:0007669"/>
    <property type="project" value="InterPro"/>
</dbReference>
<dbReference type="GO" id="GO:0009097">
    <property type="term" value="P:isoleucine biosynthetic process"/>
    <property type="evidence" value="ECO:0000318"/>
    <property type="project" value="GO_Central"/>
</dbReference>
<dbReference type="GO" id="GO:0009099">
    <property type="term" value="P:L-valine biosynthetic process"/>
    <property type="evidence" value="ECO:0000318"/>
    <property type="project" value="GO_Central"/>
</dbReference>
<dbReference type="FunFam" id="3.40.50.720:FF:000023">
    <property type="entry name" value="Ketol-acid reductoisomerase (NADP(+))"/>
    <property type="match status" value="1"/>
</dbReference>
<dbReference type="Gene3D" id="6.10.240.10">
    <property type="match status" value="1"/>
</dbReference>
<dbReference type="Gene3D" id="3.40.50.720">
    <property type="entry name" value="NAD(P)-binding Rossmann-like Domain"/>
    <property type="match status" value="1"/>
</dbReference>
<dbReference type="HAMAP" id="MF_00435">
    <property type="entry name" value="IlvC"/>
    <property type="match status" value="1"/>
</dbReference>
<dbReference type="InterPro" id="IPR008927">
    <property type="entry name" value="6-PGluconate_DH-like_C_sf"/>
</dbReference>
<dbReference type="InterPro" id="IPR013023">
    <property type="entry name" value="KARI"/>
</dbReference>
<dbReference type="InterPro" id="IPR000506">
    <property type="entry name" value="KARI_C"/>
</dbReference>
<dbReference type="InterPro" id="IPR013116">
    <property type="entry name" value="KARI_N"/>
</dbReference>
<dbReference type="InterPro" id="IPR014359">
    <property type="entry name" value="KARI_prok"/>
</dbReference>
<dbReference type="InterPro" id="IPR036291">
    <property type="entry name" value="NAD(P)-bd_dom_sf"/>
</dbReference>
<dbReference type="NCBIfam" id="TIGR00465">
    <property type="entry name" value="ilvC"/>
    <property type="match status" value="1"/>
</dbReference>
<dbReference type="NCBIfam" id="NF004017">
    <property type="entry name" value="PRK05479.1"/>
    <property type="match status" value="1"/>
</dbReference>
<dbReference type="PANTHER" id="PTHR21371">
    <property type="entry name" value="KETOL-ACID REDUCTOISOMERASE, MITOCHONDRIAL"/>
    <property type="match status" value="1"/>
</dbReference>
<dbReference type="PANTHER" id="PTHR21371:SF1">
    <property type="entry name" value="KETOL-ACID REDUCTOISOMERASE, MITOCHONDRIAL"/>
    <property type="match status" value="1"/>
</dbReference>
<dbReference type="Pfam" id="PF01450">
    <property type="entry name" value="KARI_C"/>
    <property type="match status" value="1"/>
</dbReference>
<dbReference type="Pfam" id="PF07991">
    <property type="entry name" value="KARI_N"/>
    <property type="match status" value="1"/>
</dbReference>
<dbReference type="PIRSF" id="PIRSF000116">
    <property type="entry name" value="IlvC_gammaproteo"/>
    <property type="match status" value="1"/>
</dbReference>
<dbReference type="SUPFAM" id="SSF48179">
    <property type="entry name" value="6-phosphogluconate dehydrogenase C-terminal domain-like"/>
    <property type="match status" value="1"/>
</dbReference>
<dbReference type="SUPFAM" id="SSF51735">
    <property type="entry name" value="NAD(P)-binding Rossmann-fold domains"/>
    <property type="match status" value="1"/>
</dbReference>
<dbReference type="PROSITE" id="PS51851">
    <property type="entry name" value="KARI_C"/>
    <property type="match status" value="1"/>
</dbReference>
<dbReference type="PROSITE" id="PS51850">
    <property type="entry name" value="KARI_N"/>
    <property type="match status" value="1"/>
</dbReference>